<dbReference type="EMBL" id="CP000749">
    <property type="protein sequence ID" value="ABR73382.1"/>
    <property type="molecule type" value="Genomic_DNA"/>
</dbReference>
<dbReference type="SMR" id="A6W3V3"/>
<dbReference type="STRING" id="400668.Mmwyl1_4487"/>
<dbReference type="KEGG" id="mmw:Mmwyl1_4487"/>
<dbReference type="eggNOG" id="COG0230">
    <property type="taxonomic scope" value="Bacteria"/>
</dbReference>
<dbReference type="HOGENOM" id="CLU_129938_2_0_6"/>
<dbReference type="GO" id="GO:1990904">
    <property type="term" value="C:ribonucleoprotein complex"/>
    <property type="evidence" value="ECO:0007669"/>
    <property type="project" value="UniProtKB-KW"/>
</dbReference>
<dbReference type="GO" id="GO:0005840">
    <property type="term" value="C:ribosome"/>
    <property type="evidence" value="ECO:0007669"/>
    <property type="project" value="UniProtKB-KW"/>
</dbReference>
<dbReference type="GO" id="GO:0003735">
    <property type="term" value="F:structural constituent of ribosome"/>
    <property type="evidence" value="ECO:0007669"/>
    <property type="project" value="InterPro"/>
</dbReference>
<dbReference type="GO" id="GO:0006412">
    <property type="term" value="P:translation"/>
    <property type="evidence" value="ECO:0007669"/>
    <property type="project" value="UniProtKB-UniRule"/>
</dbReference>
<dbReference type="FunFam" id="1.10.287.3980:FF:000001">
    <property type="entry name" value="Mitochondrial ribosomal protein L34"/>
    <property type="match status" value="1"/>
</dbReference>
<dbReference type="Gene3D" id="1.10.287.3980">
    <property type="match status" value="1"/>
</dbReference>
<dbReference type="HAMAP" id="MF_00391">
    <property type="entry name" value="Ribosomal_bL34"/>
    <property type="match status" value="1"/>
</dbReference>
<dbReference type="InterPro" id="IPR000271">
    <property type="entry name" value="Ribosomal_bL34"/>
</dbReference>
<dbReference type="InterPro" id="IPR020939">
    <property type="entry name" value="Ribosomal_bL34_CS"/>
</dbReference>
<dbReference type="NCBIfam" id="TIGR01030">
    <property type="entry name" value="rpmH_bact"/>
    <property type="match status" value="1"/>
</dbReference>
<dbReference type="PANTHER" id="PTHR14503:SF4">
    <property type="entry name" value="LARGE RIBOSOMAL SUBUNIT PROTEIN BL34M"/>
    <property type="match status" value="1"/>
</dbReference>
<dbReference type="PANTHER" id="PTHR14503">
    <property type="entry name" value="MITOCHONDRIAL RIBOSOMAL PROTEIN 34 FAMILY MEMBER"/>
    <property type="match status" value="1"/>
</dbReference>
<dbReference type="Pfam" id="PF00468">
    <property type="entry name" value="Ribosomal_L34"/>
    <property type="match status" value="1"/>
</dbReference>
<dbReference type="PROSITE" id="PS00784">
    <property type="entry name" value="RIBOSOMAL_L34"/>
    <property type="match status" value="1"/>
</dbReference>
<keyword id="KW-0687">Ribonucleoprotein</keyword>
<keyword id="KW-0689">Ribosomal protein</keyword>
<reference key="1">
    <citation type="submission" date="2007-06" db="EMBL/GenBank/DDBJ databases">
        <title>Complete sequence of Marinomonas sp. MWYL1.</title>
        <authorList>
            <consortium name="US DOE Joint Genome Institute"/>
            <person name="Copeland A."/>
            <person name="Lucas S."/>
            <person name="Lapidus A."/>
            <person name="Barry K."/>
            <person name="Glavina del Rio T."/>
            <person name="Dalin E."/>
            <person name="Tice H."/>
            <person name="Pitluck S."/>
            <person name="Kiss H."/>
            <person name="Brettin T."/>
            <person name="Bruce D."/>
            <person name="Detter J.C."/>
            <person name="Han C."/>
            <person name="Schmutz J."/>
            <person name="Larimer F."/>
            <person name="Land M."/>
            <person name="Hauser L."/>
            <person name="Kyrpides N."/>
            <person name="Kim E."/>
            <person name="Johnston A.W.B."/>
            <person name="Todd J.D."/>
            <person name="Rogers R."/>
            <person name="Wexler M."/>
            <person name="Bond P.L."/>
            <person name="Li Y."/>
            <person name="Richardson P."/>
        </authorList>
    </citation>
    <scope>NUCLEOTIDE SEQUENCE [LARGE SCALE GENOMIC DNA]</scope>
    <source>
        <strain>MWYL1</strain>
    </source>
</reference>
<comment type="similarity">
    <text evidence="1">Belongs to the bacterial ribosomal protein bL34 family.</text>
</comment>
<organism>
    <name type="scientific">Marinomonas sp. (strain MWYL1)</name>
    <dbReference type="NCBI Taxonomy" id="400668"/>
    <lineage>
        <taxon>Bacteria</taxon>
        <taxon>Pseudomonadati</taxon>
        <taxon>Pseudomonadota</taxon>
        <taxon>Gammaproteobacteria</taxon>
        <taxon>Oceanospirillales</taxon>
        <taxon>Oceanospirillaceae</taxon>
        <taxon>Marinomonas</taxon>
    </lineage>
</organism>
<name>RL34_MARMS</name>
<proteinExistence type="inferred from homology"/>
<sequence length="44" mass="5135">MKRTFQPSVLKRKRNHGFRARMATKGGRQVIARRRARGRKVLSA</sequence>
<evidence type="ECO:0000255" key="1">
    <source>
        <dbReference type="HAMAP-Rule" id="MF_00391"/>
    </source>
</evidence>
<evidence type="ECO:0000256" key="2">
    <source>
        <dbReference type="SAM" id="MobiDB-lite"/>
    </source>
</evidence>
<evidence type="ECO:0000305" key="3"/>
<accession>A6W3V3</accession>
<protein>
    <recommendedName>
        <fullName evidence="1">Large ribosomal subunit protein bL34</fullName>
    </recommendedName>
    <alternativeName>
        <fullName evidence="3">50S ribosomal protein L34</fullName>
    </alternativeName>
</protein>
<gene>
    <name evidence="1" type="primary">rpmH</name>
    <name type="ordered locus">Mmwyl1_4487</name>
</gene>
<feature type="chain" id="PRO_1000080255" description="Large ribosomal subunit protein bL34">
    <location>
        <begin position="1"/>
        <end position="44"/>
    </location>
</feature>
<feature type="region of interest" description="Disordered" evidence="2">
    <location>
        <begin position="23"/>
        <end position="44"/>
    </location>
</feature>
<feature type="compositionally biased region" description="Basic residues" evidence="2">
    <location>
        <begin position="31"/>
        <end position="44"/>
    </location>
</feature>